<gene>
    <name evidence="1" type="primary">purR</name>
    <name type="ordered locus">SPAB_01893</name>
</gene>
<proteinExistence type="inferred from homology"/>
<evidence type="ECO:0000255" key="1">
    <source>
        <dbReference type="HAMAP-Rule" id="MF_01277"/>
    </source>
</evidence>
<reference key="1">
    <citation type="submission" date="2007-11" db="EMBL/GenBank/DDBJ databases">
        <authorList>
            <consortium name="The Salmonella enterica serovar Paratyphi B Genome Sequencing Project"/>
            <person name="McClelland M."/>
            <person name="Sanderson E.K."/>
            <person name="Porwollik S."/>
            <person name="Spieth J."/>
            <person name="Clifton W.S."/>
            <person name="Fulton R."/>
            <person name="Cordes M."/>
            <person name="Wollam A."/>
            <person name="Shah N."/>
            <person name="Pepin K."/>
            <person name="Bhonagiri V."/>
            <person name="Nash W."/>
            <person name="Johnson M."/>
            <person name="Thiruvilangam P."/>
            <person name="Wilson R."/>
        </authorList>
    </citation>
    <scope>NUCLEOTIDE SEQUENCE [LARGE SCALE GENOMIC DNA]</scope>
    <source>
        <strain>ATCC BAA-1250 / SPB7</strain>
    </source>
</reference>
<accession>A9N0Y2</accession>
<feature type="chain" id="PRO_1000085876" description="HTH-type transcriptional repressor PurR">
    <location>
        <begin position="1"/>
        <end position="341"/>
    </location>
</feature>
<feature type="domain" description="HTH lacI-type" evidence="1">
    <location>
        <begin position="2"/>
        <end position="56"/>
    </location>
</feature>
<feature type="DNA-binding region" description="H-T-H motif" evidence="1">
    <location>
        <begin position="4"/>
        <end position="23"/>
    </location>
</feature>
<feature type="DNA-binding region" evidence="1">
    <location>
        <begin position="48"/>
        <end position="56"/>
    </location>
</feature>
<feature type="binding site" evidence="1">
    <location>
        <position position="73"/>
    </location>
    <ligand>
        <name>hypoxanthine</name>
        <dbReference type="ChEBI" id="CHEBI:17368"/>
    </ligand>
</feature>
<feature type="binding site" evidence="1">
    <location>
        <position position="190"/>
    </location>
    <ligand>
        <name>hypoxanthine</name>
        <dbReference type="ChEBI" id="CHEBI:17368"/>
    </ligand>
</feature>
<feature type="binding site" evidence="1">
    <location>
        <position position="192"/>
    </location>
    <ligand>
        <name>hypoxanthine</name>
        <dbReference type="ChEBI" id="CHEBI:17368"/>
    </ligand>
</feature>
<feature type="binding site" evidence="1">
    <location>
        <position position="221"/>
    </location>
    <ligand>
        <name>hypoxanthine</name>
        <dbReference type="ChEBI" id="CHEBI:17368"/>
    </ligand>
</feature>
<feature type="binding site" evidence="1">
    <location>
        <position position="275"/>
    </location>
    <ligand>
        <name>hypoxanthine</name>
        <dbReference type="ChEBI" id="CHEBI:17368"/>
    </ligand>
</feature>
<dbReference type="EMBL" id="CP000886">
    <property type="protein sequence ID" value="ABX67285.1"/>
    <property type="molecule type" value="Genomic_DNA"/>
</dbReference>
<dbReference type="RefSeq" id="WP_000190993.1">
    <property type="nucleotide sequence ID" value="NC_010102.1"/>
</dbReference>
<dbReference type="SMR" id="A9N0Y2"/>
<dbReference type="KEGG" id="spq:SPAB_01893"/>
<dbReference type="PATRIC" id="fig|1016998.12.peg.1786"/>
<dbReference type="HOGENOM" id="CLU_037628_6_2_6"/>
<dbReference type="BioCyc" id="SENT1016998:SPAB_RS07695-MONOMER"/>
<dbReference type="UniPathway" id="UPA00488"/>
<dbReference type="Proteomes" id="UP000008556">
    <property type="component" value="Chromosome"/>
</dbReference>
<dbReference type="GO" id="GO:0003700">
    <property type="term" value="F:DNA-binding transcription factor activity"/>
    <property type="evidence" value="ECO:0007669"/>
    <property type="project" value="TreeGrafter"/>
</dbReference>
<dbReference type="GO" id="GO:0000976">
    <property type="term" value="F:transcription cis-regulatory region binding"/>
    <property type="evidence" value="ECO:0007669"/>
    <property type="project" value="TreeGrafter"/>
</dbReference>
<dbReference type="GO" id="GO:0045892">
    <property type="term" value="P:negative regulation of DNA-templated transcription"/>
    <property type="evidence" value="ECO:0007669"/>
    <property type="project" value="UniProtKB-UniRule"/>
</dbReference>
<dbReference type="GO" id="GO:0006164">
    <property type="term" value="P:purine nucleotide biosynthetic process"/>
    <property type="evidence" value="ECO:0007669"/>
    <property type="project" value="UniProtKB-UniPathway"/>
</dbReference>
<dbReference type="CDD" id="cd01392">
    <property type="entry name" value="HTH_LacI"/>
    <property type="match status" value="1"/>
</dbReference>
<dbReference type="CDD" id="cd06275">
    <property type="entry name" value="PBP1_PurR"/>
    <property type="match status" value="1"/>
</dbReference>
<dbReference type="FunFam" id="1.10.260.40:FF:000002">
    <property type="entry name" value="HTH-type transcriptional repressor PurR"/>
    <property type="match status" value="1"/>
</dbReference>
<dbReference type="FunFam" id="3.40.50.2300:FF:000045">
    <property type="entry name" value="HTH-type transcriptional repressor PurR"/>
    <property type="match status" value="1"/>
</dbReference>
<dbReference type="Gene3D" id="3.40.50.2300">
    <property type="match status" value="2"/>
</dbReference>
<dbReference type="Gene3D" id="1.10.260.40">
    <property type="entry name" value="lambda repressor-like DNA-binding domains"/>
    <property type="match status" value="1"/>
</dbReference>
<dbReference type="HAMAP" id="MF_01277">
    <property type="entry name" value="HTH_type_PurR"/>
    <property type="match status" value="1"/>
</dbReference>
<dbReference type="InterPro" id="IPR000843">
    <property type="entry name" value="HTH_LacI"/>
</dbReference>
<dbReference type="InterPro" id="IPR046335">
    <property type="entry name" value="LacI/GalR-like_sensor"/>
</dbReference>
<dbReference type="InterPro" id="IPR010982">
    <property type="entry name" value="Lambda_DNA-bd_dom_sf"/>
</dbReference>
<dbReference type="InterPro" id="IPR028082">
    <property type="entry name" value="Peripla_BP_I"/>
</dbReference>
<dbReference type="InterPro" id="IPR023588">
    <property type="entry name" value="Tscrpt_reg_HTH_PurR"/>
</dbReference>
<dbReference type="NCBIfam" id="NF007979">
    <property type="entry name" value="PRK10703.1"/>
    <property type="match status" value="1"/>
</dbReference>
<dbReference type="PANTHER" id="PTHR30146:SF148">
    <property type="entry name" value="HTH-TYPE TRANSCRIPTIONAL REPRESSOR PURR-RELATED"/>
    <property type="match status" value="1"/>
</dbReference>
<dbReference type="PANTHER" id="PTHR30146">
    <property type="entry name" value="LACI-RELATED TRANSCRIPTIONAL REPRESSOR"/>
    <property type="match status" value="1"/>
</dbReference>
<dbReference type="Pfam" id="PF00356">
    <property type="entry name" value="LacI"/>
    <property type="match status" value="1"/>
</dbReference>
<dbReference type="Pfam" id="PF13377">
    <property type="entry name" value="Peripla_BP_3"/>
    <property type="match status" value="1"/>
</dbReference>
<dbReference type="PRINTS" id="PR00036">
    <property type="entry name" value="HTHLACI"/>
</dbReference>
<dbReference type="SMART" id="SM00354">
    <property type="entry name" value="HTH_LACI"/>
    <property type="match status" value="1"/>
</dbReference>
<dbReference type="SUPFAM" id="SSF47413">
    <property type="entry name" value="lambda repressor-like DNA-binding domains"/>
    <property type="match status" value="1"/>
</dbReference>
<dbReference type="SUPFAM" id="SSF53822">
    <property type="entry name" value="Periplasmic binding protein-like I"/>
    <property type="match status" value="1"/>
</dbReference>
<dbReference type="PROSITE" id="PS00356">
    <property type="entry name" value="HTH_LACI_1"/>
    <property type="match status" value="1"/>
</dbReference>
<dbReference type="PROSITE" id="PS50932">
    <property type="entry name" value="HTH_LACI_2"/>
    <property type="match status" value="1"/>
</dbReference>
<sequence length="341" mass="38048">MATIKDVAKRANVSTTTVSHVINKTRFVAEETRNAVWAAIKELHYSPSAVARSLKVNHTKSIGLLATSSEAAYFAEIIEAVEKNCFQKGYTLILGNAWNNLEKQRAYLSMMAQKRVDGLLVMCSEYPEPLLSMLEEYRHIPMVVMDWGEAKADFTDTVIDNAFAGGYMAGRYLVERGHRDIGVIPGPLERNTGAGRLAGFMKAMEEALINVPDNWIVQGDFEPESGYHAMQQILSQSHRPTAVFCGGDIMAMGALCAADEMGLRVPQDVSVIGYDNVRNARYFTPALTTIHQPKDSLGETAFNMLLDRIVNKREESQSIEVHPRLVERRSVADGPFRDYRR</sequence>
<organism>
    <name type="scientific">Salmonella paratyphi B (strain ATCC BAA-1250 / SPB7)</name>
    <dbReference type="NCBI Taxonomy" id="1016998"/>
    <lineage>
        <taxon>Bacteria</taxon>
        <taxon>Pseudomonadati</taxon>
        <taxon>Pseudomonadota</taxon>
        <taxon>Gammaproteobacteria</taxon>
        <taxon>Enterobacterales</taxon>
        <taxon>Enterobacteriaceae</taxon>
        <taxon>Salmonella</taxon>
    </lineage>
</organism>
<keyword id="KW-0238">DNA-binding</keyword>
<keyword id="KW-0658">Purine biosynthesis</keyword>
<keyword id="KW-0678">Repressor</keyword>
<keyword id="KW-0804">Transcription</keyword>
<keyword id="KW-0805">Transcription regulation</keyword>
<comment type="function">
    <text evidence="1">Is the main repressor of the genes involved in the de novo synthesis of purine nucleotides, regulating purB, purC, purEK, purF, purHD, purL, purMN and guaBA expression. PurR is allosterically activated to bind its cognate DNA by binding the purine corepressors, hypoxanthine or guanine, thereby effecting transcription repression.</text>
</comment>
<comment type="pathway">
    <text>Purine metabolism; purine nucleotide biosynthesis [regulation].</text>
</comment>
<comment type="subunit">
    <text evidence="1">Homodimer.</text>
</comment>
<comment type="domain">
    <text evidence="1">Consists of two structural and functional domains: an N-terminal DNA-binding domain, approximately the first 60 residues, and a larger C-terminal domain, approximately 280 residues, which imparts the function of corepressor binding and oligomerization.</text>
</comment>
<name>PURR_SALPB</name>
<protein>
    <recommendedName>
        <fullName evidence="1">HTH-type transcriptional repressor PurR</fullName>
    </recommendedName>
    <alternativeName>
        <fullName evidence="1">Pur regulon repressor</fullName>
    </alternativeName>
    <alternativeName>
        <fullName evidence="1">Purine nucleotide synthesis repressor</fullName>
    </alternativeName>
</protein>